<keyword id="KW-0997">Cell inner membrane</keyword>
<keyword id="KW-1003">Cell membrane</keyword>
<keyword id="KW-0204">Cytolysis</keyword>
<keyword id="KW-0354">Hemolysis</keyword>
<keyword id="KW-0472">Membrane</keyword>
<keyword id="KW-0812">Transmembrane</keyword>
<keyword id="KW-1133">Transmembrane helix</keyword>
<keyword id="KW-0813">Transport</keyword>
<sequence>MKTWLMGLYEFFQAYKTVWTEIWKIRHQLDTPDREKDENEFLPAHLELIETPVSKKPRLIAYLIMLFLFLALVISIVSHVEIVATATGKLAFSGRSKEIKPIENALVKEIFVEDGQFVEKDQLLLHLTALGADADQQKTKSSLSLTKLERYRYEILLEAVAADRLPLIELTKDEFKHATEEDKTRIRYLITEQFEAWQKQKYQKELALQRREAEKQTVLANIRKYEGSSRVENERLKDLKKLFNSKSTSKHDVLTQENRHIEAVNELAVYKSRLNEVESDLRQAKEEIHLITQLFRADILEKLKQNVEAEKQLSLELEKNEQRQIASVIRAPVSYVQQLKTHTVGGVVTTAETLMVIAPEDDVLEVTALIQNKDIGFIEVGQDAVIKVETFPYTRYGYLMGKVKNITLEAIEHPQLGLVFNSIISIDRKTLSGKDGKEIELGSGMSVTAEIKTGERSVISYLLSPLEESVSESLRER</sequence>
<reference key="1">
    <citation type="journal article" date="1991" name="J. Bacteriol.">
        <title>The Actinobacillus pleuropneumoniae hemolysin determinant: unlinked appCA and appBD loci flanked by pseudogenes.</title>
        <authorList>
            <person name="Chang Y.-F."/>
            <person name="Young R."/>
            <person name="Struck D.K."/>
        </authorList>
    </citation>
    <scope>NUCLEOTIDE SEQUENCE [GENOMIC DNA]</scope>
    <source>
        <strain>Serotype 5</strain>
    </source>
</reference>
<reference key="2">
    <citation type="journal article" date="1991" name="Infect. Immun.">
        <title>Cytolysins of Actinobacillus pleuropneumoniae serotype 9.</title>
        <authorList>
            <person name="Smits M.A."/>
            <person name="Briaire J."/>
            <person name="Jansen R."/>
            <person name="Smith H.E."/>
            <person name="Kamp E.M."/>
            <person name="Gielkens A.L.J."/>
        </authorList>
    </citation>
    <scope>NUCLEOTIDE SEQUENCE [GENOMIC DNA]</scope>
    <source>
        <strain>Isolate CVI 13261 / Serotype 9</strain>
    </source>
</reference>
<reference key="3">
    <citation type="journal article" date="1994" name="Gene">
        <title>Sequence analysis and transcription of the apxI operon (hemolysin I) from Actinobacillus pleuropneumoniae.</title>
        <authorList>
            <person name="Frey J."/>
            <person name="Haldimann A."/>
            <person name="Nicolet J."/>
            <person name="Boffini A."/>
            <person name="Prentki P."/>
        </authorList>
    </citation>
    <scope>NUCLEOTIDE SEQUENCE [GENOMIC DNA]</scope>
    <source>
        <strain>ATCC 27088 / DSM 13472 / CCM 5869 / S4074 / Serotype 1</strain>
    </source>
</reference>
<evidence type="ECO:0000255" key="1"/>
<evidence type="ECO:0000305" key="2"/>
<gene>
    <name type="primary">apxID</name>
    <name type="synonym">appD</name>
    <name type="synonym">clyID</name>
    <name type="synonym">hlyID</name>
</gene>
<accession>P26761</accession>
<feature type="chain" id="PRO_0000201891" description="RTX-I toxin determinant D">
    <location>
        <begin position="1"/>
        <end position="477"/>
    </location>
</feature>
<feature type="topological domain" description="Cytoplasmic" evidence="1">
    <location>
        <begin position="1"/>
        <end position="59"/>
    </location>
</feature>
<feature type="transmembrane region" description="Helical" evidence="1">
    <location>
        <begin position="60"/>
        <end position="80"/>
    </location>
</feature>
<feature type="topological domain" description="Periplasmic" evidence="1">
    <location>
        <begin position="81"/>
        <end position="477"/>
    </location>
</feature>
<feature type="sequence variant" description="In strain: S 4074 / Serotype 1 and Isolate CVI 13261 / Serotype 9.">
    <original>A</original>
    <variation>R</variation>
    <location>
        <position position="14"/>
    </location>
</feature>
<feature type="sequence variant" description="In strain: S 4074 / Serotype 1 and Isolate CVI 13261 / Serotype 9.">
    <original>G</original>
    <variation>D</variation>
    <location>
        <position position="94"/>
    </location>
</feature>
<feature type="sequence variant" description="In strain: S 4074 / Serotype 1 and Isolate CVI 13261 / Serotype 9.">
    <original>E</original>
    <variation>Q</variation>
    <location>
        <position position="113"/>
    </location>
</feature>
<feature type="sequence variant" description="In strain: S 4074 / Serotype 1 and Isolate CVI 13261 / Serotype 9.">
    <original>S</original>
    <variation>I</variation>
    <location>
        <position position="228"/>
    </location>
</feature>
<feature type="sequence variant" description="In strain: S 4074 / Serotype 1 and Isolate CVI 13261 / Serotype 9.">
    <original>Y</original>
    <variation>GT</variation>
    <location>
        <position position="335"/>
    </location>
</feature>
<organism>
    <name type="scientific">Actinobacillus pleuropneumoniae</name>
    <name type="common">Haemophilus pleuropneumoniae</name>
    <dbReference type="NCBI Taxonomy" id="715"/>
    <lineage>
        <taxon>Bacteria</taxon>
        <taxon>Pseudomonadati</taxon>
        <taxon>Pseudomonadota</taxon>
        <taxon>Gammaproteobacteria</taxon>
        <taxon>Pasteurellales</taxon>
        <taxon>Pasteurellaceae</taxon>
        <taxon>Actinobacillus</taxon>
    </lineage>
</organism>
<name>RTX1D_ACTPL</name>
<dbReference type="EMBL" id="M65808">
    <property type="protein sequence ID" value="AAB00967.1"/>
    <property type="molecule type" value="Genomic_DNA"/>
</dbReference>
<dbReference type="EMBL" id="X61112">
    <property type="protein sequence ID" value="CAA43426.1"/>
    <property type="molecule type" value="Genomic_DNA"/>
</dbReference>
<dbReference type="EMBL" id="X68595">
    <property type="protein sequence ID" value="CAA48588.1"/>
    <property type="molecule type" value="Genomic_DNA"/>
</dbReference>
<dbReference type="PIR" id="E43599">
    <property type="entry name" value="E43599"/>
</dbReference>
<dbReference type="SMR" id="P26761"/>
<dbReference type="GO" id="GO:0005886">
    <property type="term" value="C:plasma membrane"/>
    <property type="evidence" value="ECO:0007669"/>
    <property type="project" value="UniProtKB-SubCell"/>
</dbReference>
<dbReference type="GO" id="GO:0031640">
    <property type="term" value="P:killing of cells of another organism"/>
    <property type="evidence" value="ECO:0007669"/>
    <property type="project" value="UniProtKB-KW"/>
</dbReference>
<dbReference type="GO" id="GO:0009306">
    <property type="term" value="P:protein secretion"/>
    <property type="evidence" value="ECO:0007669"/>
    <property type="project" value="InterPro"/>
</dbReference>
<dbReference type="Gene3D" id="2.40.30.170">
    <property type="match status" value="1"/>
</dbReference>
<dbReference type="InterPro" id="IPR050739">
    <property type="entry name" value="MFP"/>
</dbReference>
<dbReference type="InterPro" id="IPR006144">
    <property type="entry name" value="Secretion_HlyD_CS"/>
</dbReference>
<dbReference type="InterPro" id="IPR010129">
    <property type="entry name" value="T1SS_HlyD"/>
</dbReference>
<dbReference type="NCBIfam" id="TIGR01843">
    <property type="entry name" value="type_I_hlyD"/>
    <property type="match status" value="1"/>
</dbReference>
<dbReference type="PANTHER" id="PTHR30386:SF27">
    <property type="entry name" value="MEMBRANE FUSION PROTEIN (MFP) FAMILY PROTEIN"/>
    <property type="match status" value="1"/>
</dbReference>
<dbReference type="PANTHER" id="PTHR30386">
    <property type="entry name" value="MEMBRANE FUSION SUBUNIT OF EMRAB-TOLC MULTIDRUG EFFLUX PUMP"/>
    <property type="match status" value="1"/>
</dbReference>
<dbReference type="Pfam" id="PF13437">
    <property type="entry name" value="HlyD_3"/>
    <property type="match status" value="1"/>
</dbReference>
<dbReference type="PRINTS" id="PR01490">
    <property type="entry name" value="RTXTOXIND"/>
</dbReference>
<dbReference type="PROSITE" id="PS00543">
    <property type="entry name" value="HLYD_FAMILY"/>
    <property type="match status" value="1"/>
</dbReference>
<comment type="function">
    <text>Involved in the transport of the toxin RTX-I as well as that of RTX-II.</text>
</comment>
<comment type="subcellular location">
    <subcellularLocation>
        <location evidence="2">Cell inner membrane</location>
        <topology evidence="2">Single-pass membrane protein</topology>
    </subcellularLocation>
</comment>
<comment type="miscellaneous">
    <text>The sequence shown is that of serotype 5.</text>
</comment>
<comment type="similarity">
    <text evidence="2">Belongs to the membrane fusion protein (MFP) (TC 8.A.1) family.</text>
</comment>
<protein>
    <recommendedName>
        <fullName>RTX-I toxin determinant D</fullName>
    </recommendedName>
    <alternativeName>
        <fullName>APX-ID</fullName>
    </alternativeName>
    <alternativeName>
        <fullName>Cytolysin ID</fullName>
        <shortName>CLY-ID</shortName>
    </alternativeName>
    <alternativeName>
        <fullName>HLY-ID</fullName>
    </alternativeName>
    <alternativeName>
        <fullName>Toxin RTX-I secretion protein D</fullName>
    </alternativeName>
</protein>
<proteinExistence type="inferred from homology"/>